<dbReference type="EC" id="1.1.5.4" evidence="1"/>
<dbReference type="EMBL" id="CT978603">
    <property type="protein sequence ID" value="CAK27452.1"/>
    <property type="molecule type" value="Genomic_DNA"/>
</dbReference>
<dbReference type="SMR" id="A5GRE3"/>
<dbReference type="STRING" id="316278.SynRCC307_0549"/>
<dbReference type="KEGG" id="syr:SynRCC307_0549"/>
<dbReference type="eggNOG" id="COG0579">
    <property type="taxonomic scope" value="Bacteria"/>
</dbReference>
<dbReference type="HOGENOM" id="CLU_028151_0_0_3"/>
<dbReference type="OrthoDB" id="9763983at2"/>
<dbReference type="UniPathway" id="UPA00223">
    <property type="reaction ID" value="UER01008"/>
</dbReference>
<dbReference type="Proteomes" id="UP000001115">
    <property type="component" value="Chromosome"/>
</dbReference>
<dbReference type="GO" id="GO:0047545">
    <property type="term" value="F:2-hydroxyglutarate dehydrogenase activity"/>
    <property type="evidence" value="ECO:0007669"/>
    <property type="project" value="TreeGrafter"/>
</dbReference>
<dbReference type="GO" id="GO:0008924">
    <property type="term" value="F:L-malate dehydrogenase (quinone) activity"/>
    <property type="evidence" value="ECO:0007669"/>
    <property type="project" value="UniProtKB-UniRule"/>
</dbReference>
<dbReference type="GO" id="GO:0006099">
    <property type="term" value="P:tricarboxylic acid cycle"/>
    <property type="evidence" value="ECO:0007669"/>
    <property type="project" value="UniProtKB-UniRule"/>
</dbReference>
<dbReference type="Gene3D" id="3.30.9.10">
    <property type="entry name" value="D-Amino Acid Oxidase, subunit A, domain 2"/>
    <property type="match status" value="1"/>
</dbReference>
<dbReference type="Gene3D" id="3.50.50.60">
    <property type="entry name" value="FAD/NAD(P)-binding domain"/>
    <property type="match status" value="1"/>
</dbReference>
<dbReference type="HAMAP" id="MF_00212">
    <property type="entry name" value="MQO"/>
    <property type="match status" value="1"/>
</dbReference>
<dbReference type="InterPro" id="IPR036188">
    <property type="entry name" value="FAD/NAD-bd_sf"/>
</dbReference>
<dbReference type="InterPro" id="IPR006231">
    <property type="entry name" value="MQO"/>
</dbReference>
<dbReference type="NCBIfam" id="TIGR01320">
    <property type="entry name" value="mal_quin_oxido"/>
    <property type="match status" value="1"/>
</dbReference>
<dbReference type="NCBIfam" id="NF003606">
    <property type="entry name" value="PRK05257.2-1"/>
    <property type="match status" value="1"/>
</dbReference>
<dbReference type="NCBIfam" id="NF003607">
    <property type="entry name" value="PRK05257.2-3"/>
    <property type="match status" value="1"/>
</dbReference>
<dbReference type="NCBIfam" id="NF003611">
    <property type="entry name" value="PRK05257.3-2"/>
    <property type="match status" value="1"/>
</dbReference>
<dbReference type="PANTHER" id="PTHR43104">
    <property type="entry name" value="L-2-HYDROXYGLUTARATE DEHYDROGENASE, MITOCHONDRIAL"/>
    <property type="match status" value="1"/>
</dbReference>
<dbReference type="PANTHER" id="PTHR43104:SF2">
    <property type="entry name" value="L-2-HYDROXYGLUTARATE DEHYDROGENASE, MITOCHONDRIAL"/>
    <property type="match status" value="1"/>
</dbReference>
<dbReference type="Pfam" id="PF06039">
    <property type="entry name" value="Mqo"/>
    <property type="match status" value="1"/>
</dbReference>
<dbReference type="SUPFAM" id="SSF51905">
    <property type="entry name" value="FAD/NAD(P)-binding domain"/>
    <property type="match status" value="1"/>
</dbReference>
<reference key="1">
    <citation type="submission" date="2006-05" db="EMBL/GenBank/DDBJ databases">
        <authorList>
            <consortium name="Genoscope"/>
        </authorList>
    </citation>
    <scope>NUCLEOTIDE SEQUENCE [LARGE SCALE GENOMIC DNA]</scope>
    <source>
        <strain>RCC307</strain>
    </source>
</reference>
<organism>
    <name type="scientific">Synechococcus sp. (strain RCC307)</name>
    <dbReference type="NCBI Taxonomy" id="316278"/>
    <lineage>
        <taxon>Bacteria</taxon>
        <taxon>Bacillati</taxon>
        <taxon>Cyanobacteriota</taxon>
        <taxon>Cyanophyceae</taxon>
        <taxon>Synechococcales</taxon>
        <taxon>Synechococcaceae</taxon>
        <taxon>Synechococcus</taxon>
    </lineage>
</organism>
<name>MQO_SYNR3</name>
<keyword id="KW-0274">FAD</keyword>
<keyword id="KW-0285">Flavoprotein</keyword>
<keyword id="KW-0560">Oxidoreductase</keyword>
<keyword id="KW-1185">Reference proteome</keyword>
<keyword id="KW-0816">Tricarboxylic acid cycle</keyword>
<sequence length="477" mass="50985">MTDRYDAVLVGAGIMGATLAALLHELDPAMRLLMLERLDGPALESSAAANNAGTGHAANCELNYTPQQADGSVATAKALAINAAFERSLEFWATLRERGELDTPAFLNSVPHISFVWGQGDVAFLRQRHQQLSALPAFAGMEWSSDPAELAEWMPLVMQGRGASEPVAATRISRGTDVDFGSLTRLYLQDLQRSGALELRTGCEVNDLTRKSNGDWSVELAGGERVQTPFVFLGAGGGALPLLQRSTIPEAKAFAGFPVSGQWLVCGDNQLASRHLAKVYGKAKVGAPPMSVPHLDTRFINGERSLLFGPFAGFSTKFLKQGSLLDLPRSVRIGNLLPMLQVGAGNFPLVQYLINQLRQSPEQRLEALQQFLPQAEASDWTLSVAGQRVQIIKNGPKGGQLQLGTEVVAAADGSLAALLGASPGASTAVTTMLEVLERCFASRLATPAWQERLKALFPSWGGDVLSSRSRNTAVLGL</sequence>
<comment type="catalytic activity">
    <reaction evidence="1">
        <text>(S)-malate + a quinone = a quinol + oxaloacetate</text>
        <dbReference type="Rhea" id="RHEA:46012"/>
        <dbReference type="ChEBI" id="CHEBI:15589"/>
        <dbReference type="ChEBI" id="CHEBI:16452"/>
        <dbReference type="ChEBI" id="CHEBI:24646"/>
        <dbReference type="ChEBI" id="CHEBI:132124"/>
        <dbReference type="EC" id="1.1.5.4"/>
    </reaction>
</comment>
<comment type="cofactor">
    <cofactor evidence="1">
        <name>FAD</name>
        <dbReference type="ChEBI" id="CHEBI:57692"/>
    </cofactor>
</comment>
<comment type="pathway">
    <text evidence="1">Carbohydrate metabolism; tricarboxylic acid cycle; oxaloacetate from (S)-malate (quinone route): step 1/1.</text>
</comment>
<comment type="similarity">
    <text evidence="1">Belongs to the MQO family.</text>
</comment>
<accession>A5GRE3</accession>
<evidence type="ECO:0000255" key="1">
    <source>
        <dbReference type="HAMAP-Rule" id="MF_00212"/>
    </source>
</evidence>
<gene>
    <name evidence="1" type="primary">mqo</name>
    <name type="ordered locus">SynRCC307_0549</name>
</gene>
<feature type="chain" id="PRO_0000325515" description="Probable malate:quinone oxidoreductase">
    <location>
        <begin position="1"/>
        <end position="477"/>
    </location>
</feature>
<proteinExistence type="inferred from homology"/>
<protein>
    <recommendedName>
        <fullName evidence="1">Probable malate:quinone oxidoreductase</fullName>
        <ecNumber evidence="1">1.1.5.4</ecNumber>
    </recommendedName>
    <alternativeName>
        <fullName evidence="1">MQO</fullName>
    </alternativeName>
    <alternativeName>
        <fullName evidence="1">Malate dehydrogenase [quinone]</fullName>
    </alternativeName>
</protein>